<reference key="1">
    <citation type="journal article" date="2008" name="J. Bacteriol.">
        <title>Complete genome sequence of uropathogenic Proteus mirabilis, a master of both adherence and motility.</title>
        <authorList>
            <person name="Pearson M.M."/>
            <person name="Sebaihia M."/>
            <person name="Churcher C."/>
            <person name="Quail M.A."/>
            <person name="Seshasayee A.S."/>
            <person name="Luscombe N.M."/>
            <person name="Abdellah Z."/>
            <person name="Arrosmith C."/>
            <person name="Atkin B."/>
            <person name="Chillingworth T."/>
            <person name="Hauser H."/>
            <person name="Jagels K."/>
            <person name="Moule S."/>
            <person name="Mungall K."/>
            <person name="Norbertczak H."/>
            <person name="Rabbinowitsch E."/>
            <person name="Walker D."/>
            <person name="Whithead S."/>
            <person name="Thomson N.R."/>
            <person name="Rather P.N."/>
            <person name="Parkhill J."/>
            <person name="Mobley H.L.T."/>
        </authorList>
    </citation>
    <scope>NUCLEOTIDE SEQUENCE [LARGE SCALE GENOMIC DNA]</scope>
    <source>
        <strain>HI4320</strain>
    </source>
</reference>
<comment type="function">
    <text evidence="1">Catalyzes the formation of acetyl phosphate from acetate and ATP. Can also catalyze the reverse reaction.</text>
</comment>
<comment type="catalytic activity">
    <reaction evidence="1">
        <text>acetate + ATP = acetyl phosphate + ADP</text>
        <dbReference type="Rhea" id="RHEA:11352"/>
        <dbReference type="ChEBI" id="CHEBI:22191"/>
        <dbReference type="ChEBI" id="CHEBI:30089"/>
        <dbReference type="ChEBI" id="CHEBI:30616"/>
        <dbReference type="ChEBI" id="CHEBI:456216"/>
        <dbReference type="EC" id="2.7.2.1"/>
    </reaction>
</comment>
<comment type="cofactor">
    <cofactor evidence="1">
        <name>Mg(2+)</name>
        <dbReference type="ChEBI" id="CHEBI:18420"/>
    </cofactor>
    <cofactor evidence="1">
        <name>Mn(2+)</name>
        <dbReference type="ChEBI" id="CHEBI:29035"/>
    </cofactor>
    <text evidence="1">Mg(2+). Can also accept Mn(2+).</text>
</comment>
<comment type="pathway">
    <text evidence="1">Metabolic intermediate biosynthesis; acetyl-CoA biosynthesis; acetyl-CoA from acetate: step 1/2.</text>
</comment>
<comment type="subunit">
    <text evidence="1">Homodimer.</text>
</comment>
<comment type="subcellular location">
    <subcellularLocation>
        <location evidence="1">Cytoplasm</location>
    </subcellularLocation>
</comment>
<comment type="similarity">
    <text evidence="1">Belongs to the acetokinase family.</text>
</comment>
<sequence length="400" mass="43534">MSSKLVLVLNCGSSSLKFAIINPENGEEFLSGLAECFNLPEARLKWKMDGQKHEAALGAGAAHSEALNFIVNTILAEKPELSQQIAAIGHRIVHGGEKFTKSVVITDEVIKGIEAAIPFAPLHNPAHLIGIEEARKAFPHLINKMVAVFDTAFHQTMPEEAYLYALPYSLYKDHSIRRYGAHGTSHFFVSREAAKMLNKPVDELNVITCHLGNGGSVSAIVNGKCVDTSMGLTPLEGLVMGTRSGDIDPAIVFHLHDTLGMSVEDINKLLTKESGLLGLTEVTSDCRYVEDNYETKADAKRAMDVYCHRLAKYIGSYCALMEGRLDAIIFTGGIGENAAMVRELSLKKLALLGFEVDHQRNLDARFGKSGTITTDNSRLAVVIPTNEELVIAQDASRLTA</sequence>
<name>ACKA_PROMH</name>
<accession>B4EZD9</accession>
<dbReference type="EC" id="2.7.2.1" evidence="1"/>
<dbReference type="EMBL" id="AM942759">
    <property type="protein sequence ID" value="CAR43683.1"/>
    <property type="molecule type" value="Genomic_DNA"/>
</dbReference>
<dbReference type="RefSeq" id="WP_004243716.1">
    <property type="nucleotide sequence ID" value="NC_010554.1"/>
</dbReference>
<dbReference type="SMR" id="B4EZD9"/>
<dbReference type="EnsemblBacteria" id="CAR43683">
    <property type="protein sequence ID" value="CAR43683"/>
    <property type="gene ID" value="PMI1771"/>
</dbReference>
<dbReference type="GeneID" id="6802912"/>
<dbReference type="KEGG" id="pmr:PMI1771"/>
<dbReference type="eggNOG" id="COG0282">
    <property type="taxonomic scope" value="Bacteria"/>
</dbReference>
<dbReference type="HOGENOM" id="CLU_020352_0_1_6"/>
<dbReference type="UniPathway" id="UPA00340">
    <property type="reaction ID" value="UER00458"/>
</dbReference>
<dbReference type="Proteomes" id="UP000008319">
    <property type="component" value="Chromosome"/>
</dbReference>
<dbReference type="GO" id="GO:0005829">
    <property type="term" value="C:cytosol"/>
    <property type="evidence" value="ECO:0007669"/>
    <property type="project" value="TreeGrafter"/>
</dbReference>
<dbReference type="GO" id="GO:0008776">
    <property type="term" value="F:acetate kinase activity"/>
    <property type="evidence" value="ECO:0007669"/>
    <property type="project" value="UniProtKB-UniRule"/>
</dbReference>
<dbReference type="GO" id="GO:0005524">
    <property type="term" value="F:ATP binding"/>
    <property type="evidence" value="ECO:0007669"/>
    <property type="project" value="UniProtKB-KW"/>
</dbReference>
<dbReference type="GO" id="GO:0000287">
    <property type="term" value="F:magnesium ion binding"/>
    <property type="evidence" value="ECO:0007669"/>
    <property type="project" value="UniProtKB-UniRule"/>
</dbReference>
<dbReference type="GO" id="GO:0006083">
    <property type="term" value="P:acetate metabolic process"/>
    <property type="evidence" value="ECO:0007669"/>
    <property type="project" value="TreeGrafter"/>
</dbReference>
<dbReference type="GO" id="GO:0006085">
    <property type="term" value="P:acetyl-CoA biosynthetic process"/>
    <property type="evidence" value="ECO:0007669"/>
    <property type="project" value="UniProtKB-UniRule"/>
</dbReference>
<dbReference type="CDD" id="cd24010">
    <property type="entry name" value="ASKHA_NBD_AcK_PK"/>
    <property type="match status" value="1"/>
</dbReference>
<dbReference type="FunFam" id="3.30.420.40:FF:000041">
    <property type="entry name" value="Acetate kinase"/>
    <property type="match status" value="1"/>
</dbReference>
<dbReference type="FunFam" id="3.30.420.40:FF:000042">
    <property type="entry name" value="Acetate kinase"/>
    <property type="match status" value="1"/>
</dbReference>
<dbReference type="Gene3D" id="3.30.420.40">
    <property type="match status" value="2"/>
</dbReference>
<dbReference type="HAMAP" id="MF_00020">
    <property type="entry name" value="Acetate_kinase"/>
    <property type="match status" value="1"/>
</dbReference>
<dbReference type="InterPro" id="IPR004372">
    <property type="entry name" value="Ac/propionate_kinase"/>
</dbReference>
<dbReference type="InterPro" id="IPR000890">
    <property type="entry name" value="Aliphatic_acid_kin_short-chain"/>
</dbReference>
<dbReference type="InterPro" id="IPR023865">
    <property type="entry name" value="Aliphatic_acid_kinase_CS"/>
</dbReference>
<dbReference type="InterPro" id="IPR043129">
    <property type="entry name" value="ATPase_NBD"/>
</dbReference>
<dbReference type="NCBIfam" id="TIGR00016">
    <property type="entry name" value="ackA"/>
    <property type="match status" value="1"/>
</dbReference>
<dbReference type="PANTHER" id="PTHR21060">
    <property type="entry name" value="ACETATE KINASE"/>
    <property type="match status" value="1"/>
</dbReference>
<dbReference type="PANTHER" id="PTHR21060:SF21">
    <property type="entry name" value="ACETATE KINASE"/>
    <property type="match status" value="1"/>
</dbReference>
<dbReference type="Pfam" id="PF00871">
    <property type="entry name" value="Acetate_kinase"/>
    <property type="match status" value="1"/>
</dbReference>
<dbReference type="PIRSF" id="PIRSF000722">
    <property type="entry name" value="Acetate_prop_kin"/>
    <property type="match status" value="1"/>
</dbReference>
<dbReference type="PRINTS" id="PR00471">
    <property type="entry name" value="ACETATEKNASE"/>
</dbReference>
<dbReference type="SUPFAM" id="SSF53067">
    <property type="entry name" value="Actin-like ATPase domain"/>
    <property type="match status" value="2"/>
</dbReference>
<dbReference type="PROSITE" id="PS01075">
    <property type="entry name" value="ACETATE_KINASE_1"/>
    <property type="match status" value="1"/>
</dbReference>
<dbReference type="PROSITE" id="PS01076">
    <property type="entry name" value="ACETATE_KINASE_2"/>
    <property type="match status" value="1"/>
</dbReference>
<gene>
    <name evidence="1" type="primary">ackA</name>
    <name type="ordered locus">PMI1771</name>
</gene>
<evidence type="ECO:0000255" key="1">
    <source>
        <dbReference type="HAMAP-Rule" id="MF_00020"/>
    </source>
</evidence>
<proteinExistence type="inferred from homology"/>
<feature type="chain" id="PRO_1000089990" description="Acetate kinase">
    <location>
        <begin position="1"/>
        <end position="400"/>
    </location>
</feature>
<feature type="active site" description="Proton donor/acceptor" evidence="1">
    <location>
        <position position="150"/>
    </location>
</feature>
<feature type="binding site" evidence="1">
    <location>
        <position position="10"/>
    </location>
    <ligand>
        <name>Mg(2+)</name>
        <dbReference type="ChEBI" id="CHEBI:18420"/>
    </ligand>
</feature>
<feature type="binding site" evidence="1">
    <location>
        <position position="17"/>
    </location>
    <ligand>
        <name>ATP</name>
        <dbReference type="ChEBI" id="CHEBI:30616"/>
    </ligand>
</feature>
<feature type="binding site" evidence="1">
    <location>
        <position position="91"/>
    </location>
    <ligand>
        <name>substrate</name>
    </ligand>
</feature>
<feature type="binding site" evidence="1">
    <location>
        <begin position="210"/>
        <end position="214"/>
    </location>
    <ligand>
        <name>ATP</name>
        <dbReference type="ChEBI" id="CHEBI:30616"/>
    </ligand>
</feature>
<feature type="binding site" evidence="1">
    <location>
        <begin position="285"/>
        <end position="287"/>
    </location>
    <ligand>
        <name>ATP</name>
        <dbReference type="ChEBI" id="CHEBI:30616"/>
    </ligand>
</feature>
<feature type="binding site" evidence="1">
    <location>
        <begin position="333"/>
        <end position="337"/>
    </location>
    <ligand>
        <name>ATP</name>
        <dbReference type="ChEBI" id="CHEBI:30616"/>
    </ligand>
</feature>
<feature type="binding site" evidence="1">
    <location>
        <position position="387"/>
    </location>
    <ligand>
        <name>Mg(2+)</name>
        <dbReference type="ChEBI" id="CHEBI:18420"/>
    </ligand>
</feature>
<feature type="site" description="Transition state stabilizer" evidence="1">
    <location>
        <position position="182"/>
    </location>
</feature>
<feature type="site" description="Transition state stabilizer" evidence="1">
    <location>
        <position position="243"/>
    </location>
</feature>
<organism>
    <name type="scientific">Proteus mirabilis (strain HI4320)</name>
    <dbReference type="NCBI Taxonomy" id="529507"/>
    <lineage>
        <taxon>Bacteria</taxon>
        <taxon>Pseudomonadati</taxon>
        <taxon>Pseudomonadota</taxon>
        <taxon>Gammaproteobacteria</taxon>
        <taxon>Enterobacterales</taxon>
        <taxon>Morganellaceae</taxon>
        <taxon>Proteus</taxon>
    </lineage>
</organism>
<protein>
    <recommendedName>
        <fullName evidence="1">Acetate kinase</fullName>
        <ecNumber evidence="1">2.7.2.1</ecNumber>
    </recommendedName>
    <alternativeName>
        <fullName evidence="1">Acetokinase</fullName>
    </alternativeName>
</protein>
<keyword id="KW-0067">ATP-binding</keyword>
<keyword id="KW-0963">Cytoplasm</keyword>
<keyword id="KW-0418">Kinase</keyword>
<keyword id="KW-0460">Magnesium</keyword>
<keyword id="KW-0479">Metal-binding</keyword>
<keyword id="KW-0547">Nucleotide-binding</keyword>
<keyword id="KW-1185">Reference proteome</keyword>
<keyword id="KW-0808">Transferase</keyword>